<gene>
    <name type="primary">SLD5</name>
    <name type="ordered locus">AFR332W</name>
</gene>
<name>SLD5_EREGS</name>
<proteinExistence type="inferred from homology"/>
<accession>Q753I0</accession>
<evidence type="ECO:0000250" key="1"/>
<evidence type="ECO:0000305" key="2"/>
<comment type="function">
    <text evidence="1">The GINS complex plays an essential role in the initiation of DNA replication. Has a role in chromosome segregation (By similarity).</text>
</comment>
<comment type="subunit">
    <text evidence="1">Component of the GINS complex which is a heterotetramer of SLD5, PSF1, PSF2 and PSF3.</text>
</comment>
<comment type="subcellular location">
    <subcellularLocation>
        <location evidence="1">Nucleus</location>
    </subcellularLocation>
</comment>
<comment type="similarity">
    <text evidence="2">Belongs to the GINS4/SLD5 family.</text>
</comment>
<reference key="1">
    <citation type="journal article" date="2004" name="Science">
        <title>The Ashbya gossypii genome as a tool for mapping the ancient Saccharomyces cerevisiae genome.</title>
        <authorList>
            <person name="Dietrich F.S."/>
            <person name="Voegeli S."/>
            <person name="Brachat S."/>
            <person name="Lerch A."/>
            <person name="Gates K."/>
            <person name="Steiner S."/>
            <person name="Mohr C."/>
            <person name="Poehlmann R."/>
            <person name="Luedi P."/>
            <person name="Choi S."/>
            <person name="Wing R.A."/>
            <person name="Flavier A."/>
            <person name="Gaffney T.D."/>
            <person name="Philippsen P."/>
        </authorList>
    </citation>
    <scope>NUCLEOTIDE SEQUENCE [LARGE SCALE GENOMIC DNA]</scope>
    <source>
        <strain>ATCC 10895 / CBS 109.51 / FGSC 9923 / NRRL Y-1056</strain>
    </source>
</reference>
<reference key="2">
    <citation type="journal article" date="2013" name="G3 (Bethesda)">
        <title>Genomes of Ashbya fungi isolated from insects reveal four mating-type loci, numerous translocations, lack of transposons, and distinct gene duplications.</title>
        <authorList>
            <person name="Dietrich F.S."/>
            <person name="Voegeli S."/>
            <person name="Kuo S."/>
            <person name="Philippsen P."/>
        </authorList>
    </citation>
    <scope>GENOME REANNOTATION</scope>
    <scope>SEQUENCE REVISION TO 149</scope>
    <source>
        <strain>ATCC 10895 / CBS 109.51 / FGSC 9923 / NRRL Y-1056</strain>
    </source>
</reference>
<feature type="chain" id="PRO_0000255428" description="DNA replication complex GINS protein SLD5">
    <location>
        <begin position="1"/>
        <end position="266"/>
    </location>
</feature>
<dbReference type="EMBL" id="AE016819">
    <property type="protein sequence ID" value="AAS53703.2"/>
    <property type="molecule type" value="Genomic_DNA"/>
</dbReference>
<dbReference type="RefSeq" id="NP_985879.2">
    <property type="nucleotide sequence ID" value="NM_211234.2"/>
</dbReference>
<dbReference type="SMR" id="Q753I0"/>
<dbReference type="FunCoup" id="Q753I0">
    <property type="interactions" value="665"/>
</dbReference>
<dbReference type="STRING" id="284811.Q753I0"/>
<dbReference type="EnsemblFungi" id="AAS53703">
    <property type="protein sequence ID" value="AAS53703"/>
    <property type="gene ID" value="AGOS_AFR332W"/>
</dbReference>
<dbReference type="GeneID" id="4622144"/>
<dbReference type="KEGG" id="ago:AGOS_AFR332W"/>
<dbReference type="eggNOG" id="KOG3176">
    <property type="taxonomic scope" value="Eukaryota"/>
</dbReference>
<dbReference type="HOGENOM" id="CLU_071893_2_0_1"/>
<dbReference type="InParanoid" id="Q753I0"/>
<dbReference type="OMA" id="ILETAWI"/>
<dbReference type="OrthoDB" id="338231at2759"/>
<dbReference type="Proteomes" id="UP000000591">
    <property type="component" value="Chromosome VI"/>
</dbReference>
<dbReference type="GO" id="GO:0071162">
    <property type="term" value="C:CMG complex"/>
    <property type="evidence" value="ECO:0007669"/>
    <property type="project" value="EnsemblFungi"/>
</dbReference>
<dbReference type="GO" id="GO:0000811">
    <property type="term" value="C:GINS complex"/>
    <property type="evidence" value="ECO:0000318"/>
    <property type="project" value="GO_Central"/>
</dbReference>
<dbReference type="GO" id="GO:0043596">
    <property type="term" value="C:nuclear replication fork"/>
    <property type="evidence" value="ECO:0007669"/>
    <property type="project" value="EnsemblFungi"/>
</dbReference>
<dbReference type="GO" id="GO:0007059">
    <property type="term" value="P:chromosome segregation"/>
    <property type="evidence" value="ECO:0007669"/>
    <property type="project" value="UniProtKB-KW"/>
</dbReference>
<dbReference type="GO" id="GO:0006261">
    <property type="term" value="P:DNA-templated DNA replication"/>
    <property type="evidence" value="ECO:0007669"/>
    <property type="project" value="EnsemblFungi"/>
</dbReference>
<dbReference type="GO" id="GO:0000727">
    <property type="term" value="P:double-strand break repair via break-induced replication"/>
    <property type="evidence" value="ECO:0000318"/>
    <property type="project" value="GO_Central"/>
</dbReference>
<dbReference type="CDD" id="cd11711">
    <property type="entry name" value="GINS_A_Sld5"/>
    <property type="match status" value="1"/>
</dbReference>
<dbReference type="CDD" id="cd21692">
    <property type="entry name" value="GINS_B_Sld5"/>
    <property type="match status" value="1"/>
</dbReference>
<dbReference type="FunFam" id="1.20.58.1030:FF:000009">
    <property type="entry name" value="DNA replication complex GINS protein SLD5"/>
    <property type="match status" value="1"/>
</dbReference>
<dbReference type="Gene3D" id="1.20.58.1030">
    <property type="match status" value="1"/>
</dbReference>
<dbReference type="Gene3D" id="3.40.5.60">
    <property type="match status" value="1"/>
</dbReference>
<dbReference type="InterPro" id="IPR021151">
    <property type="entry name" value="GINS_A"/>
</dbReference>
<dbReference type="InterPro" id="IPR036224">
    <property type="entry name" value="GINS_bundle-like_dom_sf"/>
</dbReference>
<dbReference type="InterPro" id="IPR008591">
    <property type="entry name" value="GINS_Sld5"/>
</dbReference>
<dbReference type="InterPro" id="IPR031633">
    <property type="entry name" value="SLD5_C"/>
</dbReference>
<dbReference type="InterPro" id="IPR038749">
    <property type="entry name" value="Sld5_GINS_A"/>
</dbReference>
<dbReference type="PANTHER" id="PTHR21206:SF0">
    <property type="entry name" value="DNA REPLICATION COMPLEX GINS PROTEIN SLD5"/>
    <property type="match status" value="1"/>
</dbReference>
<dbReference type="PANTHER" id="PTHR21206">
    <property type="entry name" value="SLD5 PROTEIN"/>
    <property type="match status" value="1"/>
</dbReference>
<dbReference type="Pfam" id="PF05916">
    <property type="entry name" value="Sld5"/>
    <property type="match status" value="1"/>
</dbReference>
<dbReference type="Pfam" id="PF16922">
    <property type="entry name" value="SLD5_C"/>
    <property type="match status" value="1"/>
</dbReference>
<dbReference type="PIRSF" id="PIRSF007764">
    <property type="entry name" value="Sld5"/>
    <property type="match status" value="1"/>
</dbReference>
<dbReference type="SUPFAM" id="SSF158573">
    <property type="entry name" value="GINS helical bundle-like"/>
    <property type="match status" value="1"/>
</dbReference>
<dbReference type="SUPFAM" id="SSF160059">
    <property type="entry name" value="PriA/YqbF domain"/>
    <property type="match status" value="1"/>
</dbReference>
<protein>
    <recommendedName>
        <fullName>DNA replication complex GINS protein SLD5</fullName>
    </recommendedName>
</protein>
<sequence>MDINIDDILADLDRDTTAVGSTPAPAGDDTTRLDDSAATVAADYSTLVTHWCNERVAPELLPYPHTLMARVLARLAAQIEHLETLSTGVLEQTLDRSAKLPLLCMEAELERLKFVVRSLLRCRLGKIDRFGLYLRQLDARSPGALQTLLSAQERVYYERHSAILLKLFNNAILRHMPAEMQAVDDTEGSVSMIDEPEWARFVFLYVREPAPDAPDPLLAVDDHGQPCYSVNIPELGEVVDLAVGGIYIMRYNVIKDLLMDGKVVLI</sequence>
<keyword id="KW-0159">Chromosome partition</keyword>
<keyword id="KW-0235">DNA replication</keyword>
<keyword id="KW-0539">Nucleus</keyword>
<keyword id="KW-1185">Reference proteome</keyword>
<organism>
    <name type="scientific">Eremothecium gossypii (strain ATCC 10895 / CBS 109.51 / FGSC 9923 / NRRL Y-1056)</name>
    <name type="common">Yeast</name>
    <name type="synonym">Ashbya gossypii</name>
    <dbReference type="NCBI Taxonomy" id="284811"/>
    <lineage>
        <taxon>Eukaryota</taxon>
        <taxon>Fungi</taxon>
        <taxon>Dikarya</taxon>
        <taxon>Ascomycota</taxon>
        <taxon>Saccharomycotina</taxon>
        <taxon>Saccharomycetes</taxon>
        <taxon>Saccharomycetales</taxon>
        <taxon>Saccharomycetaceae</taxon>
        <taxon>Eremothecium</taxon>
    </lineage>
</organism>